<comment type="function">
    <text evidence="1">Converts heme B (protoheme IX) to heme O by substitution of the vinyl group on carbon 2 of heme B porphyrin ring with a hydroxyethyl farnesyl side group.</text>
</comment>
<comment type="catalytic activity">
    <reaction evidence="1">
        <text>heme b + (2E,6E)-farnesyl diphosphate + H2O = Fe(II)-heme o + diphosphate</text>
        <dbReference type="Rhea" id="RHEA:28070"/>
        <dbReference type="ChEBI" id="CHEBI:15377"/>
        <dbReference type="ChEBI" id="CHEBI:33019"/>
        <dbReference type="ChEBI" id="CHEBI:60344"/>
        <dbReference type="ChEBI" id="CHEBI:60530"/>
        <dbReference type="ChEBI" id="CHEBI:175763"/>
        <dbReference type="EC" id="2.5.1.141"/>
    </reaction>
</comment>
<comment type="pathway">
    <text evidence="1">Porphyrin-containing compound metabolism; heme O biosynthesis; heme O from protoheme: step 1/1.</text>
</comment>
<comment type="subcellular location">
    <subcellularLocation>
        <location evidence="1">Cell inner membrane</location>
        <topology evidence="1">Multi-pass membrane protein</topology>
    </subcellularLocation>
</comment>
<comment type="miscellaneous">
    <text evidence="1">Carbon 2 of the heme B porphyrin ring is defined according to the Fischer nomenclature.</text>
</comment>
<comment type="similarity">
    <text evidence="1">Belongs to the UbiA prenyltransferase family. Protoheme IX farnesyltransferase subfamily.</text>
</comment>
<gene>
    <name evidence="1" type="primary">ctaB</name>
    <name type="ordered locus">RF_0550</name>
</gene>
<proteinExistence type="inferred from homology"/>
<name>COXX_RICFE</name>
<feature type="chain" id="PRO_0000274893" description="Protoheme IX farnesyltransferase">
    <location>
        <begin position="1"/>
        <end position="305"/>
    </location>
</feature>
<feature type="transmembrane region" description="Helical" evidence="1">
    <location>
        <begin position="31"/>
        <end position="51"/>
    </location>
</feature>
<feature type="transmembrane region" description="Helical" evidence="1">
    <location>
        <begin position="52"/>
        <end position="72"/>
    </location>
</feature>
<feature type="transmembrane region" description="Helical" evidence="1">
    <location>
        <begin position="102"/>
        <end position="119"/>
    </location>
</feature>
<feature type="transmembrane region" description="Helical" evidence="1">
    <location>
        <begin position="123"/>
        <end position="145"/>
    </location>
</feature>
<feature type="transmembrane region" description="Helical" evidence="1">
    <location>
        <begin position="151"/>
        <end position="171"/>
    </location>
</feature>
<feature type="transmembrane region" description="Helical" evidence="1">
    <location>
        <begin position="179"/>
        <end position="199"/>
    </location>
</feature>
<feature type="transmembrane region" description="Helical" evidence="1">
    <location>
        <begin position="225"/>
        <end position="245"/>
    </location>
</feature>
<feature type="transmembrane region" description="Helical" evidence="1">
    <location>
        <begin position="247"/>
        <end position="267"/>
    </location>
</feature>
<feature type="transmembrane region" description="Helical" evidence="1">
    <location>
        <begin position="284"/>
        <end position="304"/>
    </location>
</feature>
<accession>Q4UM22</accession>
<dbReference type="EC" id="2.5.1.141" evidence="1"/>
<dbReference type="EMBL" id="CP000053">
    <property type="protein sequence ID" value="AAY61401.1"/>
    <property type="molecule type" value="Genomic_DNA"/>
</dbReference>
<dbReference type="SMR" id="Q4UM22"/>
<dbReference type="STRING" id="315456.RF_0550"/>
<dbReference type="KEGG" id="rfe:RF_0550"/>
<dbReference type="eggNOG" id="COG0109">
    <property type="taxonomic scope" value="Bacteria"/>
</dbReference>
<dbReference type="HOGENOM" id="CLU_029631_0_2_5"/>
<dbReference type="OrthoDB" id="9814417at2"/>
<dbReference type="UniPathway" id="UPA00834">
    <property type="reaction ID" value="UER00712"/>
</dbReference>
<dbReference type="Proteomes" id="UP000008548">
    <property type="component" value="Chromosome"/>
</dbReference>
<dbReference type="GO" id="GO:0005886">
    <property type="term" value="C:plasma membrane"/>
    <property type="evidence" value="ECO:0007669"/>
    <property type="project" value="UniProtKB-SubCell"/>
</dbReference>
<dbReference type="GO" id="GO:0008495">
    <property type="term" value="F:protoheme IX farnesyltransferase activity"/>
    <property type="evidence" value="ECO:0007669"/>
    <property type="project" value="UniProtKB-UniRule"/>
</dbReference>
<dbReference type="GO" id="GO:0048034">
    <property type="term" value="P:heme O biosynthetic process"/>
    <property type="evidence" value="ECO:0007669"/>
    <property type="project" value="UniProtKB-UniRule"/>
</dbReference>
<dbReference type="CDD" id="cd13957">
    <property type="entry name" value="PT_UbiA_Cox10"/>
    <property type="match status" value="1"/>
</dbReference>
<dbReference type="Gene3D" id="1.10.357.140">
    <property type="entry name" value="UbiA prenyltransferase"/>
    <property type="match status" value="1"/>
</dbReference>
<dbReference type="HAMAP" id="MF_00154">
    <property type="entry name" value="CyoE_CtaB"/>
    <property type="match status" value="1"/>
</dbReference>
<dbReference type="InterPro" id="IPR006369">
    <property type="entry name" value="Protohaem_IX_farnesylTrfase"/>
</dbReference>
<dbReference type="InterPro" id="IPR000537">
    <property type="entry name" value="UbiA_prenyltransferase"/>
</dbReference>
<dbReference type="InterPro" id="IPR030470">
    <property type="entry name" value="UbiA_prenylTrfase_CS"/>
</dbReference>
<dbReference type="InterPro" id="IPR044878">
    <property type="entry name" value="UbiA_sf"/>
</dbReference>
<dbReference type="NCBIfam" id="TIGR01473">
    <property type="entry name" value="cyoE_ctaB"/>
    <property type="match status" value="1"/>
</dbReference>
<dbReference type="NCBIfam" id="NF003349">
    <property type="entry name" value="PRK04375.1-2"/>
    <property type="match status" value="1"/>
</dbReference>
<dbReference type="PANTHER" id="PTHR43448:SF7">
    <property type="entry name" value="4-HYDROXYBENZOATE SOLANESYLTRANSFERASE"/>
    <property type="match status" value="1"/>
</dbReference>
<dbReference type="PANTHER" id="PTHR43448">
    <property type="entry name" value="PROTOHEME IX FARNESYLTRANSFERASE, MITOCHONDRIAL"/>
    <property type="match status" value="1"/>
</dbReference>
<dbReference type="Pfam" id="PF01040">
    <property type="entry name" value="UbiA"/>
    <property type="match status" value="1"/>
</dbReference>
<dbReference type="PROSITE" id="PS00943">
    <property type="entry name" value="UBIA"/>
    <property type="match status" value="1"/>
</dbReference>
<reference key="1">
    <citation type="journal article" date="2005" name="PLoS Biol.">
        <title>The genome sequence of Rickettsia felis identifies the first putative conjugative plasmid in an obligate intracellular parasite.</title>
        <authorList>
            <person name="Ogata H."/>
            <person name="Renesto P."/>
            <person name="Audic S."/>
            <person name="Robert C."/>
            <person name="Blanc G."/>
            <person name="Fournier P.-E."/>
            <person name="Parinello H."/>
            <person name="Claverie J.-M."/>
            <person name="Raoult D."/>
        </authorList>
    </citation>
    <scope>NUCLEOTIDE SEQUENCE [LARGE SCALE GENOMIC DNA]</scope>
    <source>
        <strain>ATCC VR-1525 / URRWXCal2</strain>
    </source>
</reference>
<keyword id="KW-0997">Cell inner membrane</keyword>
<keyword id="KW-1003">Cell membrane</keyword>
<keyword id="KW-0350">Heme biosynthesis</keyword>
<keyword id="KW-0472">Membrane</keyword>
<keyword id="KW-0808">Transferase</keyword>
<keyword id="KW-0812">Transmembrane</keyword>
<keyword id="KW-1133">Transmembrane helix</keyword>
<protein>
    <recommendedName>
        <fullName evidence="1">Protoheme IX farnesyltransferase</fullName>
        <ecNumber evidence="1">2.5.1.141</ecNumber>
    </recommendedName>
    <alternativeName>
        <fullName evidence="1">Heme B farnesyltransferase</fullName>
    </alternativeName>
    <alternativeName>
        <fullName evidence="1">Heme O synthase</fullName>
    </alternativeName>
</protein>
<organism>
    <name type="scientific">Rickettsia felis (strain ATCC VR-1525 / URRWXCal2)</name>
    <name type="common">Rickettsia azadi</name>
    <dbReference type="NCBI Taxonomy" id="315456"/>
    <lineage>
        <taxon>Bacteria</taxon>
        <taxon>Pseudomonadati</taxon>
        <taxon>Pseudomonadota</taxon>
        <taxon>Alphaproteobacteria</taxon>
        <taxon>Rickettsiales</taxon>
        <taxon>Rickettsiaceae</taxon>
        <taxon>Rickettsieae</taxon>
        <taxon>Rickettsia</taxon>
        <taxon>spotted fever group</taxon>
    </lineage>
</organism>
<evidence type="ECO:0000255" key="1">
    <source>
        <dbReference type="HAMAP-Rule" id="MF_00154"/>
    </source>
</evidence>
<sequence length="305" mass="34261">MSSLVTPINLDKINHSQSTVKDYILLMKPRVMSLVIFTGFVGIWLAPYSVHPFIAGIAVVCIALGAGSAGAINMWYDRDIDSLMKRTQKRPIVRGAIEPDEALSFGLITGFFAVFFMALCVNLLASFLLLFTIFYYICIYTIWLKRRSIQNIVIGGVSGALPPVIGYAAVSNTISLESIILFLIIFIWTPPHSWALALFCNDDYKNCKVPMMPAVKGNLYTKKQILIYSILLFIVSLMPFFIGMNNFIYLITSGILGLVFLYYSGSLFYDTPDNKQAKRFFAYSIFYLFFIFLLLSSTSTISLIS</sequence>